<dbReference type="EC" id="3.5.3.11" evidence="1"/>
<dbReference type="EMBL" id="AE002098">
    <property type="protein sequence ID" value="AAF40906.1"/>
    <property type="molecule type" value="Genomic_DNA"/>
</dbReference>
<dbReference type="PIR" id="B81196">
    <property type="entry name" value="B81196"/>
</dbReference>
<dbReference type="RefSeq" id="NP_273516.1">
    <property type="nucleotide sequence ID" value="NC_003112.2"/>
</dbReference>
<dbReference type="RefSeq" id="WP_002222073.1">
    <property type="nucleotide sequence ID" value="NC_003112.2"/>
</dbReference>
<dbReference type="SMR" id="P60654"/>
<dbReference type="FunCoup" id="P60654">
    <property type="interactions" value="397"/>
</dbReference>
<dbReference type="STRING" id="122586.NMB0469"/>
<dbReference type="PaxDb" id="122586-NMB0469"/>
<dbReference type="GeneID" id="93387564"/>
<dbReference type="KEGG" id="nme:NMB0469"/>
<dbReference type="PATRIC" id="fig|122586.8.peg.614"/>
<dbReference type="HOGENOM" id="CLU_039478_0_0_4"/>
<dbReference type="InParanoid" id="P60654"/>
<dbReference type="OrthoDB" id="9789727at2"/>
<dbReference type="UniPathway" id="UPA00534">
    <property type="reaction ID" value="UER00287"/>
</dbReference>
<dbReference type="Proteomes" id="UP000000425">
    <property type="component" value="Chromosome"/>
</dbReference>
<dbReference type="GO" id="GO:0008783">
    <property type="term" value="F:agmatinase activity"/>
    <property type="evidence" value="ECO:0000318"/>
    <property type="project" value="GO_Central"/>
</dbReference>
<dbReference type="GO" id="GO:0030145">
    <property type="term" value="F:manganese ion binding"/>
    <property type="evidence" value="ECO:0007669"/>
    <property type="project" value="InterPro"/>
</dbReference>
<dbReference type="GO" id="GO:0033389">
    <property type="term" value="P:putrescine biosynthetic process from arginine, via agmatine"/>
    <property type="evidence" value="ECO:0000318"/>
    <property type="project" value="GO_Central"/>
</dbReference>
<dbReference type="GO" id="GO:0008295">
    <property type="term" value="P:spermidine biosynthetic process"/>
    <property type="evidence" value="ECO:0007669"/>
    <property type="project" value="UniProtKB-UniRule"/>
</dbReference>
<dbReference type="CDD" id="cd11592">
    <property type="entry name" value="Agmatinase_PAH"/>
    <property type="match status" value="1"/>
</dbReference>
<dbReference type="FunFam" id="3.40.800.10:FF:000001">
    <property type="entry name" value="Agmatinase"/>
    <property type="match status" value="1"/>
</dbReference>
<dbReference type="Gene3D" id="3.40.800.10">
    <property type="entry name" value="Ureohydrolase domain"/>
    <property type="match status" value="1"/>
</dbReference>
<dbReference type="HAMAP" id="MF_01418">
    <property type="entry name" value="SpeB"/>
    <property type="match status" value="1"/>
</dbReference>
<dbReference type="InterPro" id="IPR023694">
    <property type="entry name" value="Agmatinase"/>
</dbReference>
<dbReference type="InterPro" id="IPR005925">
    <property type="entry name" value="Agmatinase-rel"/>
</dbReference>
<dbReference type="InterPro" id="IPR006035">
    <property type="entry name" value="Ureohydrolase"/>
</dbReference>
<dbReference type="InterPro" id="IPR023696">
    <property type="entry name" value="Ureohydrolase_dom_sf"/>
</dbReference>
<dbReference type="InterPro" id="IPR020855">
    <property type="entry name" value="Ureohydrolase_Mn_BS"/>
</dbReference>
<dbReference type="NCBIfam" id="TIGR01230">
    <property type="entry name" value="agmatinase"/>
    <property type="match status" value="1"/>
</dbReference>
<dbReference type="NCBIfam" id="NF002564">
    <property type="entry name" value="PRK02190.1"/>
    <property type="match status" value="1"/>
</dbReference>
<dbReference type="PANTHER" id="PTHR11358">
    <property type="entry name" value="ARGINASE/AGMATINASE"/>
    <property type="match status" value="1"/>
</dbReference>
<dbReference type="PANTHER" id="PTHR11358:SF26">
    <property type="entry name" value="GUANIDINO ACID HYDROLASE, MITOCHONDRIAL"/>
    <property type="match status" value="1"/>
</dbReference>
<dbReference type="Pfam" id="PF00491">
    <property type="entry name" value="Arginase"/>
    <property type="match status" value="1"/>
</dbReference>
<dbReference type="PIRSF" id="PIRSF036979">
    <property type="entry name" value="Arginase"/>
    <property type="match status" value="1"/>
</dbReference>
<dbReference type="SUPFAM" id="SSF52768">
    <property type="entry name" value="Arginase/deacetylase"/>
    <property type="match status" value="1"/>
</dbReference>
<dbReference type="PROSITE" id="PS01053">
    <property type="entry name" value="ARGINASE_1"/>
    <property type="match status" value="1"/>
</dbReference>
<dbReference type="PROSITE" id="PS51409">
    <property type="entry name" value="ARGINASE_2"/>
    <property type="match status" value="1"/>
</dbReference>
<evidence type="ECO:0000255" key="1">
    <source>
        <dbReference type="HAMAP-Rule" id="MF_01418"/>
    </source>
</evidence>
<comment type="function">
    <text evidence="1">Catalyzes the formation of putrescine from agmatine.</text>
</comment>
<comment type="catalytic activity">
    <reaction evidence="1">
        <text>agmatine + H2O = urea + putrescine</text>
        <dbReference type="Rhea" id="RHEA:13929"/>
        <dbReference type="ChEBI" id="CHEBI:15377"/>
        <dbReference type="ChEBI" id="CHEBI:16199"/>
        <dbReference type="ChEBI" id="CHEBI:58145"/>
        <dbReference type="ChEBI" id="CHEBI:326268"/>
        <dbReference type="EC" id="3.5.3.11"/>
    </reaction>
</comment>
<comment type="cofactor">
    <cofactor evidence="1">
        <name>Mn(2+)</name>
        <dbReference type="ChEBI" id="CHEBI:29035"/>
    </cofactor>
</comment>
<comment type="pathway">
    <text evidence="1">Amine and polyamine biosynthesis; putrescine biosynthesis via agmatine pathway; putrescine from agmatine: step 1/1.</text>
</comment>
<comment type="similarity">
    <text evidence="1">Belongs to the arginase family. Agmatinase subfamily.</text>
</comment>
<protein>
    <recommendedName>
        <fullName evidence="1">Agmatinase</fullName>
        <ecNumber evidence="1">3.5.3.11</ecNumber>
    </recommendedName>
    <alternativeName>
        <fullName evidence="1">Agmatine ureohydrolase</fullName>
        <shortName evidence="1">AUH</shortName>
    </alternativeName>
</protein>
<name>SPEB_NEIMB</name>
<accession>P60654</accession>
<accession>Q9JRG2</accession>
<proteinExistence type="inferred from homology"/>
<reference key="1">
    <citation type="journal article" date="2000" name="Science">
        <title>Complete genome sequence of Neisseria meningitidis serogroup B strain MC58.</title>
        <authorList>
            <person name="Tettelin H."/>
            <person name="Saunders N.J."/>
            <person name="Heidelberg J.F."/>
            <person name="Jeffries A.C."/>
            <person name="Nelson K.E."/>
            <person name="Eisen J.A."/>
            <person name="Ketchum K.A."/>
            <person name="Hood D.W."/>
            <person name="Peden J.F."/>
            <person name="Dodson R.J."/>
            <person name="Nelson W.C."/>
            <person name="Gwinn M.L."/>
            <person name="DeBoy R.T."/>
            <person name="Peterson J.D."/>
            <person name="Hickey E.K."/>
            <person name="Haft D.H."/>
            <person name="Salzberg S.L."/>
            <person name="White O."/>
            <person name="Fleischmann R.D."/>
            <person name="Dougherty B.A."/>
            <person name="Mason T.M."/>
            <person name="Ciecko A."/>
            <person name="Parksey D.S."/>
            <person name="Blair E."/>
            <person name="Cittone H."/>
            <person name="Clark E.B."/>
            <person name="Cotton M.D."/>
            <person name="Utterback T.R."/>
            <person name="Khouri H.M."/>
            <person name="Qin H."/>
            <person name="Vamathevan J.J."/>
            <person name="Gill J."/>
            <person name="Scarlato V."/>
            <person name="Masignani V."/>
            <person name="Pizza M."/>
            <person name="Grandi G."/>
            <person name="Sun L."/>
            <person name="Smith H.O."/>
            <person name="Fraser C.M."/>
            <person name="Moxon E.R."/>
            <person name="Rappuoli R."/>
            <person name="Venter J.C."/>
        </authorList>
    </citation>
    <scope>NUCLEOTIDE SEQUENCE [LARGE SCALE GENOMIC DNA]</scope>
    <source>
        <strain>ATCC BAA-335 / MC58</strain>
    </source>
</reference>
<keyword id="KW-0378">Hydrolase</keyword>
<keyword id="KW-0464">Manganese</keyword>
<keyword id="KW-0479">Metal-binding</keyword>
<keyword id="KW-0620">Polyamine biosynthesis</keyword>
<keyword id="KW-0661">Putrescine biosynthesis</keyword>
<keyword id="KW-1185">Reference proteome</keyword>
<keyword id="KW-0745">Spermidine biosynthesis</keyword>
<gene>
    <name evidence="1" type="primary">speB</name>
    <name type="ordered locus">NMB0469</name>
</gene>
<feature type="chain" id="PRO_0000173736" description="Agmatinase">
    <location>
        <begin position="1"/>
        <end position="307"/>
    </location>
</feature>
<feature type="binding site" evidence="1">
    <location>
        <position position="128"/>
    </location>
    <ligand>
        <name>Mn(2+)</name>
        <dbReference type="ChEBI" id="CHEBI:29035"/>
    </ligand>
</feature>
<feature type="binding site" evidence="1">
    <location>
        <position position="151"/>
    </location>
    <ligand>
        <name>Mn(2+)</name>
        <dbReference type="ChEBI" id="CHEBI:29035"/>
    </ligand>
</feature>
<feature type="binding site" evidence="1">
    <location>
        <position position="153"/>
    </location>
    <ligand>
        <name>Mn(2+)</name>
        <dbReference type="ChEBI" id="CHEBI:29035"/>
    </ligand>
</feature>
<feature type="binding site" evidence="1">
    <location>
        <position position="155"/>
    </location>
    <ligand>
        <name>Mn(2+)</name>
        <dbReference type="ChEBI" id="CHEBI:29035"/>
    </ligand>
</feature>
<feature type="binding site" evidence="1">
    <location>
        <position position="232"/>
    </location>
    <ligand>
        <name>Mn(2+)</name>
        <dbReference type="ChEBI" id="CHEBI:29035"/>
    </ligand>
</feature>
<feature type="binding site" evidence="1">
    <location>
        <position position="234"/>
    </location>
    <ligand>
        <name>Mn(2+)</name>
        <dbReference type="ChEBI" id="CHEBI:29035"/>
    </ligand>
</feature>
<sequence>MQYSTLAGQTDNSLVSNNFGFLRLPLNFMPYESHADWVITGVPYDMAVSGRSGARFGPEAIRRASVNLAWEHRRFPWTFDVRERLNIIDCGDLVFSFGDSRDFVEKMEAHAGKLLSSGKRCLSLGGDHFITLPLLRAHARYFGKLALIHFDAHTDTYDNGSEYDHGTMFYTAPKEGLIDPSRSVQIGIRTEHSKKLPFTVLSAPKVNEDSVEETVRKIKETVGNMPVYLTFDIDCLDPSFAPGTGTPVCGGLSSDRALKILRGLTDLDIVGMDVVEVAPSYDQSDITALAGATIALEMLYLQGAKKD</sequence>
<organism>
    <name type="scientific">Neisseria meningitidis serogroup B (strain ATCC BAA-335 / MC58)</name>
    <dbReference type="NCBI Taxonomy" id="122586"/>
    <lineage>
        <taxon>Bacteria</taxon>
        <taxon>Pseudomonadati</taxon>
        <taxon>Pseudomonadota</taxon>
        <taxon>Betaproteobacteria</taxon>
        <taxon>Neisseriales</taxon>
        <taxon>Neisseriaceae</taxon>
        <taxon>Neisseria</taxon>
    </lineage>
</organism>